<organism>
    <name type="scientific">Mycobacterium phage D29</name>
    <name type="common">Mycobacteriophage D29</name>
    <dbReference type="NCBI Taxonomy" id="28369"/>
    <lineage>
        <taxon>Viruses</taxon>
        <taxon>Duplodnaviria</taxon>
        <taxon>Heunggongvirae</taxon>
        <taxon>Uroviricota</taxon>
        <taxon>Caudoviricetes</taxon>
        <taxon>Fromanvirus</taxon>
    </lineage>
</organism>
<proteinExistence type="inferred from homology"/>
<protein>
    <recommendedName>
        <fullName>Putative adenosylcobalamin-dependent ribonucleoside-triphosphate reductase</fullName>
        <ecNumber>1.17.4.2</ecNumber>
    </recommendedName>
    <alternativeName>
        <fullName>Gp50</fullName>
    </alternativeName>
</protein>
<reference key="1">
    <citation type="journal article" date="1998" name="J. Mol. Biol.">
        <title>Genome structure of mycobacteriophage D29: implications for phage evolution.</title>
        <authorList>
            <person name="Ford M.E."/>
            <person name="Sarkis G.J."/>
            <person name="Belanger A.E."/>
            <person name="Hendrix R.W."/>
            <person name="Hatfull G.F."/>
        </authorList>
    </citation>
    <scope>NUCLEOTIDE SEQUENCE [LARGE SCALE GENOMIC DNA]</scope>
</reference>
<gene>
    <name type="primary">50</name>
</gene>
<sequence>MTEGEIPWGPTGELVYNRTYSRVKPDGTRETWPETVERVVSGNLALVDSRYQLPGEREDLLRLMREFKILPAGRHLWASGVKNAQHLFNCWVSGWTEKPSDHFEFTFMRLMEGGGVGANYSNRFLADYPHVKQELEVHIVCDEDHDDYADLAEAGQLSSRYDSDWVDAFVIEDSREGWAAALVDLIDTHYRDDVAHKERVYDVSRVRAAGRKLKTFGGTASGPVPLAKMLTEVSEILSRCAREGEQYRFEDGGALTGLDAMEIDHAIAQCVVAGGVRRSARMAMMHWADWQVETFTNIKQDSGSHWTTNISVEVDDAFWSLAKAPVDPLNPRSTKAHRVLKALSEGAVRNGEPGMWDSSLSNVGEPNEVVCTNPCGEITLEPWEPCNLGHINLAAFVTDAGKTDYIDLIRAHRLMTRFLIRATFSAVADPKSREVLDRNRRIGVGHLGVASYLALTGRRYSQAPGDKRFTAFLREMAAEVDRAAEEFSHELRIPVPVKKRTVAPTGTIAKMPGVSEGIHPIFSRYFIRRIRFSVLDNDQFLTASQYAADGYHVEKDQYDKSGNTWVVEIPTKDTLVEAVAARFGRDAEDIVESANELTLHQLLAFQALYQTCWADNAVSFTANVDPDAYEGVDVAADLQRFSGLIKGSTIFPEESFPQAPYERITKQQYEAAAIKAVADGVDEECANGACPIK</sequence>
<accession>O64240</accession>
<comment type="catalytic activity">
    <reaction>
        <text>a 2'-deoxyribonucleoside 5'-triphosphate + [thioredoxin]-disulfide + H2O = a ribonucleoside 5'-triphosphate + [thioredoxin]-dithiol</text>
        <dbReference type="Rhea" id="RHEA:12701"/>
        <dbReference type="Rhea" id="RHEA-COMP:10698"/>
        <dbReference type="Rhea" id="RHEA-COMP:10700"/>
        <dbReference type="ChEBI" id="CHEBI:15377"/>
        <dbReference type="ChEBI" id="CHEBI:29950"/>
        <dbReference type="ChEBI" id="CHEBI:50058"/>
        <dbReference type="ChEBI" id="CHEBI:61557"/>
        <dbReference type="ChEBI" id="CHEBI:61560"/>
        <dbReference type="EC" id="1.17.4.2"/>
    </reaction>
</comment>
<comment type="cofactor">
    <cofactor evidence="1">
        <name>adenosylcob(III)alamin</name>
        <dbReference type="ChEBI" id="CHEBI:18408"/>
    </cofactor>
</comment>
<comment type="similarity">
    <text evidence="2">Belongs to the class II ribonucleoside-triphosphate reductase family.</text>
</comment>
<keyword id="KW-0846">Cobalamin</keyword>
<keyword id="KW-0170">Cobalt</keyword>
<keyword id="KW-1015">Disulfide bond</keyword>
<keyword id="KW-0235">DNA replication</keyword>
<keyword id="KW-0560">Oxidoreductase</keyword>
<keyword id="KW-0676">Redox-active center</keyword>
<keyword id="KW-1185">Reference proteome</keyword>
<feature type="chain" id="PRO_0000221430" description="Putative adenosylcobalamin-dependent ribonucleoside-triphosphate reductase">
    <location>
        <begin position="1"/>
        <end position="693"/>
    </location>
</feature>
<feature type="active site" evidence="1">
    <location>
        <position position="375"/>
    </location>
</feature>
<feature type="active site" evidence="1">
    <location>
        <position position="377"/>
    </location>
</feature>
<feature type="disulfide bond" description="Redox-active" evidence="1">
    <location>
        <begin position="90"/>
        <end position="386"/>
    </location>
</feature>
<name>VG50_BPMD2</name>
<organismHost>
    <name type="scientific">Mycobacterium</name>
    <dbReference type="NCBI Taxonomy" id="1763"/>
</organismHost>
<evidence type="ECO:0000250" key="1"/>
<evidence type="ECO:0000305" key="2"/>
<dbReference type="EC" id="1.17.4.2"/>
<dbReference type="EMBL" id="AF022214">
    <property type="protein sequence ID" value="AAC18490.1"/>
    <property type="molecule type" value="Genomic_DNA"/>
</dbReference>
<dbReference type="PIR" id="G72805">
    <property type="entry name" value="G72805"/>
</dbReference>
<dbReference type="RefSeq" id="NP_046865.1">
    <property type="nucleotide sequence ID" value="NC_001900.1"/>
</dbReference>
<dbReference type="SMR" id="O64240"/>
<dbReference type="GeneID" id="1261592"/>
<dbReference type="KEGG" id="vg:1261592"/>
<dbReference type="OrthoDB" id="2980at10239"/>
<dbReference type="Proteomes" id="UP000002131">
    <property type="component" value="Segment"/>
</dbReference>
<dbReference type="GO" id="GO:0031419">
    <property type="term" value="F:cobalamin binding"/>
    <property type="evidence" value="ECO:0007669"/>
    <property type="project" value="UniProtKB-KW"/>
</dbReference>
<dbReference type="GO" id="GO:0000166">
    <property type="term" value="F:nucleotide binding"/>
    <property type="evidence" value="ECO:0007669"/>
    <property type="project" value="InterPro"/>
</dbReference>
<dbReference type="GO" id="GO:0004748">
    <property type="term" value="F:ribonucleoside-diphosphate reductase activity, thioredoxin disulfide as acceptor"/>
    <property type="evidence" value="ECO:0007669"/>
    <property type="project" value="InterPro"/>
</dbReference>
<dbReference type="GO" id="GO:0008998">
    <property type="term" value="F:ribonucleoside-triphosphate reductase (thioredoxin) activity"/>
    <property type="evidence" value="ECO:0007669"/>
    <property type="project" value="UniProtKB-EC"/>
</dbReference>
<dbReference type="GO" id="GO:0006260">
    <property type="term" value="P:DNA replication"/>
    <property type="evidence" value="ECO:0007669"/>
    <property type="project" value="UniProtKB-KW"/>
</dbReference>
<dbReference type="Gene3D" id="3.20.70.20">
    <property type="match status" value="1"/>
</dbReference>
<dbReference type="Gene3D" id="3.30.1620.10">
    <property type="entry name" value="b-12 dependent (class ii) ribonucleotide reductase, Chain A, Domain 2"/>
    <property type="match status" value="1"/>
</dbReference>
<dbReference type="Gene3D" id="3.90.1390.10">
    <property type="entry name" value="b-12 dependent (class ii) ribonucleotide reductase, chain A, domain 3"/>
    <property type="match status" value="1"/>
</dbReference>
<dbReference type="InterPro" id="IPR050862">
    <property type="entry name" value="RdRp_reductase_class-2"/>
</dbReference>
<dbReference type="InterPro" id="IPR054158">
    <property type="entry name" value="RNR-II_ins_dom"/>
</dbReference>
<dbReference type="InterPro" id="IPR040763">
    <property type="entry name" value="RNR_alpha_hel"/>
</dbReference>
<dbReference type="InterPro" id="IPR000788">
    <property type="entry name" value="RNR_lg_C"/>
</dbReference>
<dbReference type="InterPro" id="IPR013345">
    <property type="entry name" value="RTP_Rdtase_AdoCbl-dep"/>
</dbReference>
<dbReference type="NCBIfam" id="TIGR02505">
    <property type="entry name" value="RTPR"/>
    <property type="match status" value="1"/>
</dbReference>
<dbReference type="PANTHER" id="PTHR43371:SF1">
    <property type="entry name" value="RIBONUCLEOSIDE-DIPHOSPHATE REDUCTASE"/>
    <property type="match status" value="1"/>
</dbReference>
<dbReference type="PANTHER" id="PTHR43371">
    <property type="entry name" value="VITAMIN B12-DEPENDENT RIBONUCLEOTIDE REDUCTASE"/>
    <property type="match status" value="1"/>
</dbReference>
<dbReference type="Pfam" id="PF02867">
    <property type="entry name" value="Ribonuc_red_lgC"/>
    <property type="match status" value="1"/>
</dbReference>
<dbReference type="Pfam" id="PF21995">
    <property type="entry name" value="RNR-II_ins_dom"/>
    <property type="match status" value="1"/>
</dbReference>
<dbReference type="Pfam" id="PF17975">
    <property type="entry name" value="RNR_Alpha"/>
    <property type="match status" value="1"/>
</dbReference>
<dbReference type="SUPFAM" id="SSF51998">
    <property type="entry name" value="PFL-like glycyl radical enzymes"/>
    <property type="match status" value="1"/>
</dbReference>